<comment type="function">
    <text evidence="1">Involved in the biosynthesis of isopentenyl diphosphate (IPP) and dimethylallyl diphosphate (DMAPP), two major building blocks of isoprenoid compounds. Catalyzes the conversion of 4-diphosphocytidyl-2-C-methyl-D-erythritol 2-phosphate (CDP-ME2P) to 2-C-methyl-D-erythritol 2,4-cyclodiphosphate (ME-CPP) with a corresponding release of cytidine 5-monophosphate (CMP).</text>
</comment>
<comment type="catalytic activity">
    <reaction evidence="1">
        <text>4-CDP-2-C-methyl-D-erythritol 2-phosphate = 2-C-methyl-D-erythritol 2,4-cyclic diphosphate + CMP</text>
        <dbReference type="Rhea" id="RHEA:23864"/>
        <dbReference type="ChEBI" id="CHEBI:57919"/>
        <dbReference type="ChEBI" id="CHEBI:58483"/>
        <dbReference type="ChEBI" id="CHEBI:60377"/>
        <dbReference type="EC" id="4.6.1.12"/>
    </reaction>
</comment>
<comment type="cofactor">
    <cofactor evidence="1">
        <name>a divalent metal cation</name>
        <dbReference type="ChEBI" id="CHEBI:60240"/>
    </cofactor>
    <text evidence="1">Binds 1 divalent metal cation per subunit.</text>
</comment>
<comment type="pathway">
    <text evidence="1">Isoprenoid biosynthesis; isopentenyl diphosphate biosynthesis via DXP pathway; isopentenyl diphosphate from 1-deoxy-D-xylulose 5-phosphate: step 4/6.</text>
</comment>
<comment type="subunit">
    <text evidence="1">Homotrimer.</text>
</comment>
<comment type="similarity">
    <text evidence="1">Belongs to the IspF family.</text>
</comment>
<proteinExistence type="inferred from homology"/>
<organism>
    <name type="scientific">Salmonella newport (strain SL254)</name>
    <dbReference type="NCBI Taxonomy" id="423368"/>
    <lineage>
        <taxon>Bacteria</taxon>
        <taxon>Pseudomonadati</taxon>
        <taxon>Pseudomonadota</taxon>
        <taxon>Gammaproteobacteria</taxon>
        <taxon>Enterobacterales</taxon>
        <taxon>Enterobacteriaceae</taxon>
        <taxon>Salmonella</taxon>
    </lineage>
</organism>
<evidence type="ECO:0000255" key="1">
    <source>
        <dbReference type="HAMAP-Rule" id="MF_00107"/>
    </source>
</evidence>
<gene>
    <name evidence="1" type="primary">ispF</name>
    <name type="ordered locus">SNSL254_A3135</name>
</gene>
<name>ISPF_SALNS</name>
<dbReference type="EC" id="4.6.1.12" evidence="1"/>
<dbReference type="EMBL" id="CP001113">
    <property type="protein sequence ID" value="ACF63125.1"/>
    <property type="molecule type" value="Genomic_DNA"/>
</dbReference>
<dbReference type="RefSeq" id="WP_001219244.1">
    <property type="nucleotide sequence ID" value="NZ_CCMR01000001.1"/>
</dbReference>
<dbReference type="SMR" id="B4T456"/>
<dbReference type="KEGG" id="see:SNSL254_A3135"/>
<dbReference type="HOGENOM" id="CLU_084630_2_0_6"/>
<dbReference type="UniPathway" id="UPA00056">
    <property type="reaction ID" value="UER00095"/>
</dbReference>
<dbReference type="Proteomes" id="UP000008824">
    <property type="component" value="Chromosome"/>
</dbReference>
<dbReference type="GO" id="GO:0008685">
    <property type="term" value="F:2-C-methyl-D-erythritol 2,4-cyclodiphosphate synthase activity"/>
    <property type="evidence" value="ECO:0007669"/>
    <property type="project" value="UniProtKB-UniRule"/>
</dbReference>
<dbReference type="GO" id="GO:0046872">
    <property type="term" value="F:metal ion binding"/>
    <property type="evidence" value="ECO:0007669"/>
    <property type="project" value="UniProtKB-KW"/>
</dbReference>
<dbReference type="GO" id="GO:0019288">
    <property type="term" value="P:isopentenyl diphosphate biosynthetic process, methylerythritol 4-phosphate pathway"/>
    <property type="evidence" value="ECO:0007669"/>
    <property type="project" value="UniProtKB-UniRule"/>
</dbReference>
<dbReference type="GO" id="GO:0016114">
    <property type="term" value="P:terpenoid biosynthetic process"/>
    <property type="evidence" value="ECO:0007669"/>
    <property type="project" value="InterPro"/>
</dbReference>
<dbReference type="CDD" id="cd00554">
    <property type="entry name" value="MECDP_synthase"/>
    <property type="match status" value="1"/>
</dbReference>
<dbReference type="FunFam" id="3.30.1330.50:FF:000001">
    <property type="entry name" value="2-C-methyl-D-erythritol 2,4-cyclodiphosphate synthase"/>
    <property type="match status" value="1"/>
</dbReference>
<dbReference type="Gene3D" id="3.30.1330.50">
    <property type="entry name" value="2-C-methyl-D-erythritol 2,4-cyclodiphosphate synthase"/>
    <property type="match status" value="1"/>
</dbReference>
<dbReference type="HAMAP" id="MF_00107">
    <property type="entry name" value="IspF"/>
    <property type="match status" value="1"/>
</dbReference>
<dbReference type="InterPro" id="IPR003526">
    <property type="entry name" value="MECDP_synthase"/>
</dbReference>
<dbReference type="InterPro" id="IPR020555">
    <property type="entry name" value="MECDP_synthase_CS"/>
</dbReference>
<dbReference type="InterPro" id="IPR036571">
    <property type="entry name" value="MECDP_synthase_sf"/>
</dbReference>
<dbReference type="NCBIfam" id="TIGR00151">
    <property type="entry name" value="ispF"/>
    <property type="match status" value="1"/>
</dbReference>
<dbReference type="PANTHER" id="PTHR43181">
    <property type="entry name" value="2-C-METHYL-D-ERYTHRITOL 2,4-CYCLODIPHOSPHATE SYNTHASE, CHLOROPLASTIC"/>
    <property type="match status" value="1"/>
</dbReference>
<dbReference type="PANTHER" id="PTHR43181:SF1">
    <property type="entry name" value="2-C-METHYL-D-ERYTHRITOL 2,4-CYCLODIPHOSPHATE SYNTHASE, CHLOROPLASTIC"/>
    <property type="match status" value="1"/>
</dbReference>
<dbReference type="Pfam" id="PF02542">
    <property type="entry name" value="YgbB"/>
    <property type="match status" value="1"/>
</dbReference>
<dbReference type="SUPFAM" id="SSF69765">
    <property type="entry name" value="IpsF-like"/>
    <property type="match status" value="1"/>
</dbReference>
<dbReference type="PROSITE" id="PS01350">
    <property type="entry name" value="ISPF"/>
    <property type="match status" value="1"/>
</dbReference>
<reference key="1">
    <citation type="journal article" date="2011" name="J. Bacteriol.">
        <title>Comparative genomics of 28 Salmonella enterica isolates: evidence for CRISPR-mediated adaptive sublineage evolution.</title>
        <authorList>
            <person name="Fricke W.F."/>
            <person name="Mammel M.K."/>
            <person name="McDermott P.F."/>
            <person name="Tartera C."/>
            <person name="White D.G."/>
            <person name="Leclerc J.E."/>
            <person name="Ravel J."/>
            <person name="Cebula T.A."/>
        </authorList>
    </citation>
    <scope>NUCLEOTIDE SEQUENCE [LARGE SCALE GENOMIC DNA]</scope>
    <source>
        <strain>SL254</strain>
    </source>
</reference>
<keyword id="KW-0414">Isoprene biosynthesis</keyword>
<keyword id="KW-0456">Lyase</keyword>
<keyword id="KW-0479">Metal-binding</keyword>
<protein>
    <recommendedName>
        <fullName evidence="1">2-C-methyl-D-erythritol 2,4-cyclodiphosphate synthase</fullName>
        <shortName evidence="1">MECDP-synthase</shortName>
        <shortName evidence="1">MECPP-synthase</shortName>
        <shortName evidence="1">MECPS</shortName>
        <ecNumber evidence="1">4.6.1.12</ecNumber>
    </recommendedName>
</protein>
<feature type="chain" id="PRO_1000094288" description="2-C-methyl-D-erythritol 2,4-cyclodiphosphate synthase">
    <location>
        <begin position="1"/>
        <end position="159"/>
    </location>
</feature>
<feature type="binding site" evidence="1">
    <location>
        <begin position="8"/>
        <end position="10"/>
    </location>
    <ligand>
        <name>4-CDP-2-C-methyl-D-erythritol 2-phosphate</name>
        <dbReference type="ChEBI" id="CHEBI:57919"/>
    </ligand>
</feature>
<feature type="binding site" evidence="1">
    <location>
        <position position="8"/>
    </location>
    <ligand>
        <name>a divalent metal cation</name>
        <dbReference type="ChEBI" id="CHEBI:60240"/>
    </ligand>
</feature>
<feature type="binding site" evidence="1">
    <location>
        <position position="10"/>
    </location>
    <ligand>
        <name>a divalent metal cation</name>
        <dbReference type="ChEBI" id="CHEBI:60240"/>
    </ligand>
</feature>
<feature type="binding site" evidence="1">
    <location>
        <begin position="34"/>
        <end position="35"/>
    </location>
    <ligand>
        <name>4-CDP-2-C-methyl-D-erythritol 2-phosphate</name>
        <dbReference type="ChEBI" id="CHEBI:57919"/>
    </ligand>
</feature>
<feature type="binding site" evidence="1">
    <location>
        <position position="42"/>
    </location>
    <ligand>
        <name>a divalent metal cation</name>
        <dbReference type="ChEBI" id="CHEBI:60240"/>
    </ligand>
</feature>
<feature type="binding site" evidence="1">
    <location>
        <begin position="56"/>
        <end position="58"/>
    </location>
    <ligand>
        <name>4-CDP-2-C-methyl-D-erythritol 2-phosphate</name>
        <dbReference type="ChEBI" id="CHEBI:57919"/>
    </ligand>
</feature>
<feature type="binding site" evidence="1">
    <location>
        <begin position="61"/>
        <end position="65"/>
    </location>
    <ligand>
        <name>4-CDP-2-C-methyl-D-erythritol 2-phosphate</name>
        <dbReference type="ChEBI" id="CHEBI:57919"/>
    </ligand>
</feature>
<feature type="binding site" evidence="1">
    <location>
        <begin position="100"/>
        <end position="106"/>
    </location>
    <ligand>
        <name>4-CDP-2-C-methyl-D-erythritol 2-phosphate</name>
        <dbReference type="ChEBI" id="CHEBI:57919"/>
    </ligand>
</feature>
<feature type="binding site" evidence="1">
    <location>
        <begin position="132"/>
        <end position="135"/>
    </location>
    <ligand>
        <name>4-CDP-2-C-methyl-D-erythritol 2-phosphate</name>
        <dbReference type="ChEBI" id="CHEBI:57919"/>
    </ligand>
</feature>
<feature type="binding site" evidence="1">
    <location>
        <position position="139"/>
    </location>
    <ligand>
        <name>4-CDP-2-C-methyl-D-erythritol 2-phosphate</name>
        <dbReference type="ChEBI" id="CHEBI:57919"/>
    </ligand>
</feature>
<feature type="binding site" evidence="1">
    <location>
        <position position="142"/>
    </location>
    <ligand>
        <name>4-CDP-2-C-methyl-D-erythritol 2-phosphate</name>
        <dbReference type="ChEBI" id="CHEBI:57919"/>
    </ligand>
</feature>
<feature type="site" description="Transition state stabilizer" evidence="1">
    <location>
        <position position="34"/>
    </location>
</feature>
<feature type="site" description="Transition state stabilizer" evidence="1">
    <location>
        <position position="133"/>
    </location>
</feature>
<accession>B4T456</accession>
<sequence length="159" mass="16886">MRIGHGFDVHAFGGEGPIIIGGVRIPYEKGLLAHSDGDVALHALTDALLGAAALGDIGKLFPDTDPAFKGADSRELLREAWRRIQAKGYTLGNVDVTIIAQAPKMLPHIPQMRVFIAEDLGCHMDDVNVKATTTEKLGFTGRGEGIACEAVALLMKAAK</sequence>